<name>ZNF18_HUMAN</name>
<accession>P17022</accession>
<accession>Q5QHQ3</accession>
<accession>Q8IYC4</accession>
<accession>Q8NAH6</accession>
<gene>
    <name type="primary">ZNF18</name>
    <name type="synonym">HDSG1</name>
    <name type="synonym">KOX11</name>
    <name type="synonym">ZKSCAN6</name>
    <name type="synonym">ZNF535</name>
</gene>
<evidence type="ECO:0000255" key="1">
    <source>
        <dbReference type="PROSITE-ProRule" id="PRU00042"/>
    </source>
</evidence>
<evidence type="ECO:0000255" key="2">
    <source>
        <dbReference type="PROSITE-ProRule" id="PRU00119"/>
    </source>
</evidence>
<evidence type="ECO:0000255" key="3">
    <source>
        <dbReference type="PROSITE-ProRule" id="PRU00187"/>
    </source>
</evidence>
<evidence type="ECO:0000269" key="4">
    <source>
    </source>
</evidence>
<evidence type="ECO:0000303" key="5">
    <source>
    </source>
</evidence>
<evidence type="ECO:0000305" key="6"/>
<reference key="1">
    <citation type="journal article" date="2005" name="Yi Chuan">
        <title>Molecular cloning and expression analysis of a novel human gene ZNF18.</title>
        <authorList>
            <person name="Guo L.L."/>
            <person name="Shan H.S."/>
            <person name="Zou X."/>
            <person name="Ci H.L."/>
            <person name="Zai Y.G."/>
            <person name="Li Y.P."/>
        </authorList>
    </citation>
    <scope>NUCLEOTIDE SEQUENCE [MRNA] (ISOFORM 2)</scope>
</reference>
<reference key="2">
    <citation type="journal article" date="2004" name="Nat. Genet.">
        <title>Complete sequencing and characterization of 21,243 full-length human cDNAs.</title>
        <authorList>
            <person name="Ota T."/>
            <person name="Suzuki Y."/>
            <person name="Nishikawa T."/>
            <person name="Otsuki T."/>
            <person name="Sugiyama T."/>
            <person name="Irie R."/>
            <person name="Wakamatsu A."/>
            <person name="Hayashi K."/>
            <person name="Sato H."/>
            <person name="Nagai K."/>
            <person name="Kimura K."/>
            <person name="Makita H."/>
            <person name="Sekine M."/>
            <person name="Obayashi M."/>
            <person name="Nishi T."/>
            <person name="Shibahara T."/>
            <person name="Tanaka T."/>
            <person name="Ishii S."/>
            <person name="Yamamoto J."/>
            <person name="Saito K."/>
            <person name="Kawai Y."/>
            <person name="Isono Y."/>
            <person name="Nakamura Y."/>
            <person name="Nagahari K."/>
            <person name="Murakami K."/>
            <person name="Yasuda T."/>
            <person name="Iwayanagi T."/>
            <person name="Wagatsuma M."/>
            <person name="Shiratori A."/>
            <person name="Sudo H."/>
            <person name="Hosoiri T."/>
            <person name="Kaku Y."/>
            <person name="Kodaira H."/>
            <person name="Kondo H."/>
            <person name="Sugawara M."/>
            <person name="Takahashi M."/>
            <person name="Kanda K."/>
            <person name="Yokoi T."/>
            <person name="Furuya T."/>
            <person name="Kikkawa E."/>
            <person name="Omura Y."/>
            <person name="Abe K."/>
            <person name="Kamihara K."/>
            <person name="Katsuta N."/>
            <person name="Sato K."/>
            <person name="Tanikawa M."/>
            <person name="Yamazaki M."/>
            <person name="Ninomiya K."/>
            <person name="Ishibashi T."/>
            <person name="Yamashita H."/>
            <person name="Murakawa K."/>
            <person name="Fujimori K."/>
            <person name="Tanai H."/>
            <person name="Kimata M."/>
            <person name="Watanabe M."/>
            <person name="Hiraoka S."/>
            <person name="Chiba Y."/>
            <person name="Ishida S."/>
            <person name="Ono Y."/>
            <person name="Takiguchi S."/>
            <person name="Watanabe S."/>
            <person name="Yosida M."/>
            <person name="Hotuta T."/>
            <person name="Kusano J."/>
            <person name="Kanehori K."/>
            <person name="Takahashi-Fujii A."/>
            <person name="Hara H."/>
            <person name="Tanase T.-O."/>
            <person name="Nomura Y."/>
            <person name="Togiya S."/>
            <person name="Komai F."/>
            <person name="Hara R."/>
            <person name="Takeuchi K."/>
            <person name="Arita M."/>
            <person name="Imose N."/>
            <person name="Musashino K."/>
            <person name="Yuuki H."/>
            <person name="Oshima A."/>
            <person name="Sasaki N."/>
            <person name="Aotsuka S."/>
            <person name="Yoshikawa Y."/>
            <person name="Matsunawa H."/>
            <person name="Ichihara T."/>
            <person name="Shiohata N."/>
            <person name="Sano S."/>
            <person name="Moriya S."/>
            <person name="Momiyama H."/>
            <person name="Satoh N."/>
            <person name="Takami S."/>
            <person name="Terashima Y."/>
            <person name="Suzuki O."/>
            <person name="Nakagawa S."/>
            <person name="Senoh A."/>
            <person name="Mizoguchi H."/>
            <person name="Goto Y."/>
            <person name="Shimizu F."/>
            <person name="Wakebe H."/>
            <person name="Hishigaki H."/>
            <person name="Watanabe T."/>
            <person name="Sugiyama A."/>
            <person name="Takemoto M."/>
            <person name="Kawakami B."/>
            <person name="Yamazaki M."/>
            <person name="Watanabe K."/>
            <person name="Kumagai A."/>
            <person name="Itakura S."/>
            <person name="Fukuzumi Y."/>
            <person name="Fujimori Y."/>
            <person name="Komiyama M."/>
            <person name="Tashiro H."/>
            <person name="Tanigami A."/>
            <person name="Fujiwara T."/>
            <person name="Ono T."/>
            <person name="Yamada K."/>
            <person name="Fujii Y."/>
            <person name="Ozaki K."/>
            <person name="Hirao M."/>
            <person name="Ohmori Y."/>
            <person name="Kawabata A."/>
            <person name="Hikiji T."/>
            <person name="Kobatake N."/>
            <person name="Inagaki H."/>
            <person name="Ikema Y."/>
            <person name="Okamoto S."/>
            <person name="Okitani R."/>
            <person name="Kawakami T."/>
            <person name="Noguchi S."/>
            <person name="Itoh T."/>
            <person name="Shigeta K."/>
            <person name="Senba T."/>
            <person name="Matsumura K."/>
            <person name="Nakajima Y."/>
            <person name="Mizuno T."/>
            <person name="Morinaga M."/>
            <person name="Sasaki M."/>
            <person name="Togashi T."/>
            <person name="Oyama M."/>
            <person name="Hata H."/>
            <person name="Watanabe M."/>
            <person name="Komatsu T."/>
            <person name="Mizushima-Sugano J."/>
            <person name="Satoh T."/>
            <person name="Shirai Y."/>
            <person name="Takahashi Y."/>
            <person name="Nakagawa K."/>
            <person name="Okumura K."/>
            <person name="Nagase T."/>
            <person name="Nomura N."/>
            <person name="Kikuchi H."/>
            <person name="Masuho Y."/>
            <person name="Yamashita R."/>
            <person name="Nakai K."/>
            <person name="Yada T."/>
            <person name="Nakamura Y."/>
            <person name="Ohara O."/>
            <person name="Isogai T."/>
            <person name="Sugano S."/>
        </authorList>
    </citation>
    <scope>NUCLEOTIDE SEQUENCE [LARGE SCALE MRNA] (ISOFORM 1)</scope>
    <source>
        <tissue>Prostate</tissue>
    </source>
</reference>
<reference key="3">
    <citation type="journal article" date="2004" name="Genome Res.">
        <title>The status, quality, and expansion of the NIH full-length cDNA project: the Mammalian Gene Collection (MGC).</title>
        <authorList>
            <consortium name="The MGC Project Team"/>
        </authorList>
    </citation>
    <scope>NUCLEOTIDE SEQUENCE [LARGE SCALE MRNA] (ISOFORM 1)</scope>
    <scope>VARIANTS ARG-210 AND ILE-240</scope>
    <source>
        <tissue>Brain</tissue>
    </source>
</reference>
<reference key="4">
    <citation type="journal article" date="1990" name="New Biol.">
        <title>Multiple genes encoding zinc finger domains are expressed in human T cells.</title>
        <authorList>
            <person name="Thiesen H.-J."/>
        </authorList>
    </citation>
    <scope>NUCLEOTIDE SEQUENCE [MRNA] OF 436-491 (ISOFORMS 1/2)</scope>
    <source>
        <tissue>Lymphoid tissue</tissue>
    </source>
</reference>
<proteinExistence type="evidence at protein level"/>
<feature type="chain" id="PRO_0000047340" description="Zinc finger protein 18">
    <location>
        <begin position="1"/>
        <end position="549"/>
    </location>
</feature>
<feature type="domain" description="SCAN box" evidence="3">
    <location>
        <begin position="41"/>
        <end position="123"/>
    </location>
</feature>
<feature type="domain" description="KRAB" evidence="2">
    <location>
        <begin position="211"/>
        <end position="283"/>
    </location>
</feature>
<feature type="zinc finger region" description="C2H2-type 1" evidence="1">
    <location>
        <begin position="408"/>
        <end position="430"/>
    </location>
</feature>
<feature type="zinc finger region" description="C2H2-type 2" evidence="1">
    <location>
        <begin position="436"/>
        <end position="458"/>
    </location>
</feature>
<feature type="zinc finger region" description="C2H2-type 3" evidence="1">
    <location>
        <begin position="464"/>
        <end position="486"/>
    </location>
</feature>
<feature type="zinc finger region" description="C2H2-type 4" evidence="1">
    <location>
        <begin position="492"/>
        <end position="514"/>
    </location>
</feature>
<feature type="zinc finger region" description="C2H2-type 5" evidence="1">
    <location>
        <begin position="520"/>
        <end position="542"/>
    </location>
</feature>
<feature type="splice variant" id="VSP_016947" description="In isoform 2." evidence="5">
    <location>
        <position position="251"/>
    </location>
</feature>
<feature type="sequence variant" id="VAR_024835" description="In dbSNP:rs17857095." evidence="4">
    <original>Q</original>
    <variation>R</variation>
    <location>
        <position position="210"/>
    </location>
</feature>
<feature type="sequence variant" id="VAR_024836" description="In dbSNP:rs17853545." evidence="4">
    <original>M</original>
    <variation>I</variation>
    <location>
        <position position="240"/>
    </location>
</feature>
<dbReference type="EMBL" id="AY491053">
    <property type="protein sequence ID" value="AAS67595.1"/>
    <property type="molecule type" value="mRNA"/>
</dbReference>
<dbReference type="EMBL" id="AK092656">
    <property type="protein sequence ID" value="BAC03939.1"/>
    <property type="molecule type" value="mRNA"/>
</dbReference>
<dbReference type="EMBL" id="BC036096">
    <property type="protein sequence ID" value="AAH36096.1"/>
    <property type="molecule type" value="mRNA"/>
</dbReference>
<dbReference type="EMBL" id="X52342">
    <property type="protein sequence ID" value="CAA36568.1"/>
    <property type="molecule type" value="mRNA"/>
</dbReference>
<dbReference type="CCDS" id="CCDS32568.1">
    <molecule id="P17022-1"/>
</dbReference>
<dbReference type="CCDS" id="CCDS76957.1">
    <molecule id="P17022-2"/>
</dbReference>
<dbReference type="PIR" id="I37950">
    <property type="entry name" value="S10399"/>
</dbReference>
<dbReference type="RefSeq" id="NP_001290210.1">
    <molecule id="P17022-1"/>
    <property type="nucleotide sequence ID" value="NM_001303281.2"/>
</dbReference>
<dbReference type="RefSeq" id="NP_001290211.1">
    <molecule id="P17022-2"/>
    <property type="nucleotide sequence ID" value="NM_001303282.2"/>
</dbReference>
<dbReference type="RefSeq" id="NP_653281.2">
    <molecule id="P17022-1"/>
    <property type="nucleotide sequence ID" value="NM_144680.4"/>
</dbReference>
<dbReference type="RefSeq" id="XP_011522304.1">
    <molecule id="P17022-1"/>
    <property type="nucleotide sequence ID" value="XM_011524002.4"/>
</dbReference>
<dbReference type="RefSeq" id="XP_016880495.1">
    <property type="nucleotide sequence ID" value="XM_017025006.1"/>
</dbReference>
<dbReference type="RefSeq" id="XP_016880496.1">
    <property type="nucleotide sequence ID" value="XM_017025007.1"/>
</dbReference>
<dbReference type="RefSeq" id="XP_016880497.1">
    <property type="nucleotide sequence ID" value="XM_017025008.1"/>
</dbReference>
<dbReference type="RefSeq" id="XP_016880498.1">
    <property type="nucleotide sequence ID" value="XM_017025009.1"/>
</dbReference>
<dbReference type="RefSeq" id="XP_016880499.1">
    <molecule id="P17022-2"/>
    <property type="nucleotide sequence ID" value="XM_017025010.3"/>
</dbReference>
<dbReference type="RefSeq" id="XP_016880500.1">
    <molecule id="P17022-2"/>
    <property type="nucleotide sequence ID" value="XM_017025011.3"/>
</dbReference>
<dbReference type="RefSeq" id="XP_024306677.1">
    <molecule id="P17022-1"/>
    <property type="nucleotide sequence ID" value="XM_024450909.2"/>
</dbReference>
<dbReference type="RefSeq" id="XP_024306679.1">
    <molecule id="P17022-1"/>
    <property type="nucleotide sequence ID" value="XM_024450911.2"/>
</dbReference>
<dbReference type="RefSeq" id="XP_047292603.1">
    <molecule id="P17022-1"/>
    <property type="nucleotide sequence ID" value="XM_047436647.1"/>
</dbReference>
<dbReference type="RefSeq" id="XP_047292604.1">
    <molecule id="P17022-2"/>
    <property type="nucleotide sequence ID" value="XM_047436648.1"/>
</dbReference>
<dbReference type="RefSeq" id="XP_047292605.1">
    <molecule id="P17022-2"/>
    <property type="nucleotide sequence ID" value="XM_047436649.1"/>
</dbReference>
<dbReference type="RefSeq" id="XP_054173021.1">
    <molecule id="P17022-1"/>
    <property type="nucleotide sequence ID" value="XM_054317046.1"/>
</dbReference>
<dbReference type="RefSeq" id="XP_054173022.1">
    <molecule id="P17022-1"/>
    <property type="nucleotide sequence ID" value="XM_054317047.1"/>
</dbReference>
<dbReference type="RefSeq" id="XP_054173023.1">
    <molecule id="P17022-1"/>
    <property type="nucleotide sequence ID" value="XM_054317048.1"/>
</dbReference>
<dbReference type="RefSeq" id="XP_054173024.1">
    <molecule id="P17022-1"/>
    <property type="nucleotide sequence ID" value="XM_054317049.1"/>
</dbReference>
<dbReference type="RefSeq" id="XP_054173025.1">
    <molecule id="P17022-2"/>
    <property type="nucleotide sequence ID" value="XM_054317050.1"/>
</dbReference>
<dbReference type="RefSeq" id="XP_054173026.1">
    <molecule id="P17022-2"/>
    <property type="nucleotide sequence ID" value="XM_054317051.1"/>
</dbReference>
<dbReference type="RefSeq" id="XP_054173027.1">
    <molecule id="P17022-2"/>
    <property type="nucleotide sequence ID" value="XM_054317052.1"/>
</dbReference>
<dbReference type="RefSeq" id="XP_054173028.1">
    <molecule id="P17022-2"/>
    <property type="nucleotide sequence ID" value="XM_054317053.1"/>
</dbReference>
<dbReference type="SMR" id="P17022"/>
<dbReference type="BioGRID" id="113397">
    <property type="interactions" value="13"/>
</dbReference>
<dbReference type="FunCoup" id="P17022">
    <property type="interactions" value="338"/>
</dbReference>
<dbReference type="IntAct" id="P17022">
    <property type="interactions" value="14"/>
</dbReference>
<dbReference type="MINT" id="P17022"/>
<dbReference type="STRING" id="9606.ENSP00000315664"/>
<dbReference type="GlyGen" id="P17022">
    <property type="glycosylation" value="1 site, 1 O-linked glycan (1 site)"/>
</dbReference>
<dbReference type="iPTMnet" id="P17022"/>
<dbReference type="PhosphoSitePlus" id="P17022"/>
<dbReference type="BioMuta" id="ZNF18"/>
<dbReference type="DMDM" id="85681864"/>
<dbReference type="jPOST" id="P17022"/>
<dbReference type="MassIVE" id="P17022"/>
<dbReference type="PaxDb" id="9606-ENSP00000315664"/>
<dbReference type="PeptideAtlas" id="P17022"/>
<dbReference type="ProteomicsDB" id="53420">
    <molecule id="P17022-1"/>
</dbReference>
<dbReference type="ProteomicsDB" id="53421">
    <molecule id="P17022-2"/>
</dbReference>
<dbReference type="ABCD" id="P17022">
    <property type="antibodies" value="1 sequenced antibody"/>
</dbReference>
<dbReference type="Antibodypedia" id="1806">
    <property type="antibodies" value="168 antibodies from 28 providers"/>
</dbReference>
<dbReference type="DNASU" id="7566"/>
<dbReference type="Ensembl" id="ENST00000322748.7">
    <molecule id="P17022-1"/>
    <property type="protein sequence ID" value="ENSP00000315664.3"/>
    <property type="gene ID" value="ENSG00000154957.14"/>
</dbReference>
<dbReference type="Ensembl" id="ENST00000454073.7">
    <molecule id="P17022-2"/>
    <property type="protein sequence ID" value="ENSP00000391376.3"/>
    <property type="gene ID" value="ENSG00000154957.14"/>
</dbReference>
<dbReference type="Ensembl" id="ENST00000580306.7">
    <molecule id="P17022-1"/>
    <property type="protein sequence ID" value="ENSP00000463471.1"/>
    <property type="gene ID" value="ENSG00000154957.14"/>
</dbReference>
<dbReference type="Ensembl" id="ENST00000580613.5">
    <molecule id="P17022-1"/>
    <property type="protein sequence ID" value="ENSP00000462296.3"/>
    <property type="gene ID" value="ENSG00000154957.14"/>
</dbReference>
<dbReference type="GeneID" id="7566"/>
<dbReference type="KEGG" id="hsa:7566"/>
<dbReference type="MANE-Select" id="ENST00000580306.7">
    <property type="protein sequence ID" value="ENSP00000463471.1"/>
    <property type="RefSeq nucleotide sequence ID" value="NM_001303281.2"/>
    <property type="RefSeq protein sequence ID" value="NP_001290210.1"/>
</dbReference>
<dbReference type="UCSC" id="uc002gng.1">
    <molecule id="P17022-1"/>
    <property type="organism name" value="human"/>
</dbReference>
<dbReference type="AGR" id="HGNC:12969"/>
<dbReference type="CTD" id="7566"/>
<dbReference type="DisGeNET" id="7566"/>
<dbReference type="GeneCards" id="ZNF18"/>
<dbReference type="HGNC" id="HGNC:12969">
    <property type="gene designation" value="ZNF18"/>
</dbReference>
<dbReference type="HPA" id="ENSG00000154957">
    <property type="expression patterns" value="Low tissue specificity"/>
</dbReference>
<dbReference type="MIM" id="194524">
    <property type="type" value="gene"/>
</dbReference>
<dbReference type="neXtProt" id="NX_P17022"/>
<dbReference type="OpenTargets" id="ENSG00000154957"/>
<dbReference type="PharmGKB" id="PA37551"/>
<dbReference type="VEuPathDB" id="HostDB:ENSG00000154957"/>
<dbReference type="eggNOG" id="KOG1721">
    <property type="taxonomic scope" value="Eukaryota"/>
</dbReference>
<dbReference type="GeneTree" id="ENSGT00940000161617"/>
<dbReference type="HOGENOM" id="CLU_002678_49_8_1"/>
<dbReference type="InParanoid" id="P17022"/>
<dbReference type="OMA" id="NYRDQEP"/>
<dbReference type="OrthoDB" id="6077919at2759"/>
<dbReference type="PAN-GO" id="P17022">
    <property type="GO annotations" value="3 GO annotations based on evolutionary models"/>
</dbReference>
<dbReference type="PhylomeDB" id="P17022"/>
<dbReference type="TreeFam" id="TF337489"/>
<dbReference type="PathwayCommons" id="P17022"/>
<dbReference type="Reactome" id="R-HSA-212436">
    <property type="pathway name" value="Generic Transcription Pathway"/>
</dbReference>
<dbReference type="SignaLink" id="P17022"/>
<dbReference type="BioGRID-ORCS" id="7566">
    <property type="hits" value="8 hits in 1176 CRISPR screens"/>
</dbReference>
<dbReference type="ChiTaRS" id="ZNF18">
    <property type="organism name" value="human"/>
</dbReference>
<dbReference type="GenomeRNAi" id="7566"/>
<dbReference type="Pharos" id="P17022">
    <property type="development level" value="Tdark"/>
</dbReference>
<dbReference type="PRO" id="PR:P17022"/>
<dbReference type="Proteomes" id="UP000005640">
    <property type="component" value="Chromosome 17"/>
</dbReference>
<dbReference type="RNAct" id="P17022">
    <property type="molecule type" value="protein"/>
</dbReference>
<dbReference type="Bgee" id="ENSG00000154957">
    <property type="expression patterns" value="Expressed in primordial germ cell in gonad and 99 other cell types or tissues"/>
</dbReference>
<dbReference type="ExpressionAtlas" id="P17022">
    <property type="expression patterns" value="baseline and differential"/>
</dbReference>
<dbReference type="GO" id="GO:0005634">
    <property type="term" value="C:nucleus"/>
    <property type="evidence" value="ECO:0007669"/>
    <property type="project" value="UniProtKB-SubCell"/>
</dbReference>
<dbReference type="GO" id="GO:0000981">
    <property type="term" value="F:DNA-binding transcription factor activity, RNA polymerase II-specific"/>
    <property type="evidence" value="ECO:0000318"/>
    <property type="project" value="GO_Central"/>
</dbReference>
<dbReference type="GO" id="GO:0000978">
    <property type="term" value="F:RNA polymerase II cis-regulatory region sequence-specific DNA binding"/>
    <property type="evidence" value="ECO:0000318"/>
    <property type="project" value="GO_Central"/>
</dbReference>
<dbReference type="GO" id="GO:0008270">
    <property type="term" value="F:zinc ion binding"/>
    <property type="evidence" value="ECO:0007669"/>
    <property type="project" value="UniProtKB-KW"/>
</dbReference>
<dbReference type="GO" id="GO:0006357">
    <property type="term" value="P:regulation of transcription by RNA polymerase II"/>
    <property type="evidence" value="ECO:0000318"/>
    <property type="project" value="GO_Central"/>
</dbReference>
<dbReference type="CDD" id="cd07765">
    <property type="entry name" value="KRAB_A-box"/>
    <property type="match status" value="1"/>
</dbReference>
<dbReference type="CDD" id="cd07936">
    <property type="entry name" value="SCAN"/>
    <property type="match status" value="1"/>
</dbReference>
<dbReference type="FunFam" id="3.30.160.60:FF:001183">
    <property type="entry name" value="Zinc finger protein 18"/>
    <property type="match status" value="1"/>
</dbReference>
<dbReference type="FunFam" id="3.30.160.60:FF:001193">
    <property type="entry name" value="Zinc finger protein 18"/>
    <property type="match status" value="1"/>
</dbReference>
<dbReference type="FunFam" id="3.30.160.60:FF:001262">
    <property type="entry name" value="zinc finger protein 18"/>
    <property type="match status" value="1"/>
</dbReference>
<dbReference type="FunFam" id="3.30.160.60:FF:000720">
    <property type="entry name" value="zinc finger protein 18 isoform X2"/>
    <property type="match status" value="1"/>
</dbReference>
<dbReference type="FunFam" id="1.10.4020.10:FF:000001">
    <property type="entry name" value="zinc finger protein 263 isoform X1"/>
    <property type="match status" value="1"/>
</dbReference>
<dbReference type="FunFam" id="3.30.160.60:FF:000212">
    <property type="entry name" value="zinc finger protein 382 isoform X2"/>
    <property type="match status" value="1"/>
</dbReference>
<dbReference type="Gene3D" id="6.10.140.140">
    <property type="match status" value="1"/>
</dbReference>
<dbReference type="Gene3D" id="3.30.160.60">
    <property type="entry name" value="Classic Zinc Finger"/>
    <property type="match status" value="5"/>
</dbReference>
<dbReference type="Gene3D" id="1.10.4020.10">
    <property type="entry name" value="DNA breaking-rejoining enzymes"/>
    <property type="match status" value="1"/>
</dbReference>
<dbReference type="InterPro" id="IPR001909">
    <property type="entry name" value="KRAB"/>
</dbReference>
<dbReference type="InterPro" id="IPR036051">
    <property type="entry name" value="KRAB_dom_sf"/>
</dbReference>
<dbReference type="InterPro" id="IPR003309">
    <property type="entry name" value="SCAN_dom"/>
</dbReference>
<dbReference type="InterPro" id="IPR038269">
    <property type="entry name" value="SCAN_sf"/>
</dbReference>
<dbReference type="InterPro" id="IPR036236">
    <property type="entry name" value="Znf_C2H2_sf"/>
</dbReference>
<dbReference type="InterPro" id="IPR013087">
    <property type="entry name" value="Znf_C2H2_type"/>
</dbReference>
<dbReference type="PANTHER" id="PTHR23226">
    <property type="entry name" value="ZINC FINGER AND SCAN DOMAIN-CONTAINING"/>
    <property type="match status" value="1"/>
</dbReference>
<dbReference type="PANTHER" id="PTHR23226:SF190">
    <property type="entry name" value="ZINC FINGER PROTEIN 18"/>
    <property type="match status" value="1"/>
</dbReference>
<dbReference type="Pfam" id="PF01352">
    <property type="entry name" value="KRAB"/>
    <property type="match status" value="1"/>
</dbReference>
<dbReference type="Pfam" id="PF02023">
    <property type="entry name" value="SCAN"/>
    <property type="match status" value="1"/>
</dbReference>
<dbReference type="Pfam" id="PF00096">
    <property type="entry name" value="zf-C2H2"/>
    <property type="match status" value="5"/>
</dbReference>
<dbReference type="SMART" id="SM00349">
    <property type="entry name" value="KRAB"/>
    <property type="match status" value="1"/>
</dbReference>
<dbReference type="SMART" id="SM00431">
    <property type="entry name" value="SCAN"/>
    <property type="match status" value="1"/>
</dbReference>
<dbReference type="SMART" id="SM00355">
    <property type="entry name" value="ZnF_C2H2"/>
    <property type="match status" value="5"/>
</dbReference>
<dbReference type="SUPFAM" id="SSF57667">
    <property type="entry name" value="beta-beta-alpha zinc fingers"/>
    <property type="match status" value="3"/>
</dbReference>
<dbReference type="SUPFAM" id="SSF109640">
    <property type="entry name" value="KRAB domain (Kruppel-associated box)"/>
    <property type="match status" value="1"/>
</dbReference>
<dbReference type="SUPFAM" id="SSF47353">
    <property type="entry name" value="Retrovirus capsid dimerization domain-like"/>
    <property type="match status" value="1"/>
</dbReference>
<dbReference type="PROSITE" id="PS50805">
    <property type="entry name" value="KRAB"/>
    <property type="match status" value="1"/>
</dbReference>
<dbReference type="PROSITE" id="PS50804">
    <property type="entry name" value="SCAN_BOX"/>
    <property type="match status" value="1"/>
</dbReference>
<dbReference type="PROSITE" id="PS00028">
    <property type="entry name" value="ZINC_FINGER_C2H2_1"/>
    <property type="match status" value="5"/>
</dbReference>
<dbReference type="PROSITE" id="PS50157">
    <property type="entry name" value="ZINC_FINGER_C2H2_2"/>
    <property type="match status" value="5"/>
</dbReference>
<sequence length="549" mass="62288">MPVDLGQALGLLPSLAKAEDSQFSESDAALQEELSSPETARQLFRQFRYQVMSGPHETLKQLRKLCFQWLQPEVHTKEQILEILMLEQFLTILPGEIQMWVRKQCPGSGEEAVTLVESLKGDPQRLWQWISIQVLGQDILSEKMESPSCQVGEVEPHLEVVPQELGLENSSSGPGELLSHIVKEESDTEAELALAASQPARLEERLIRDQDLGASLLPAAPQEQWRQLDSTQKEQYWDLMLETYGKMVSGAGISHPKSDLTNSIEFGEELAGIYLHVNEKIPRPTCIGDRQENDKENLNLENHRDQELLHASCQASGEVPSQASLRGFFTEDEPGCFGEGENLPEALQNIQDEGTGEQLSPQERISEKQLGQHLPNPHSGEMSTMWLEEKRETSQKGQPRAPMAQKLPTCRECGKTFYRNSQLIFHQRTHTGETYFQCTICKKAFLRSSDFVKHQRTHTGEKPCKCDYCGKGFSDFSGLRHHEKIHTGEKPYKCPICEKSFIQRSNFNRHQRVHTGEKPYKCSHCGKSFSWSSSLDKHQRSHLGKKPFQ</sequence>
<comment type="function">
    <text>May be involved in transcriptional regulation.</text>
</comment>
<comment type="interaction">
    <interactant intactId="EBI-8648067">
        <id>P17022</id>
    </interactant>
    <interactant intactId="EBI-395261">
        <id>P24863</id>
        <label>CCNC</label>
    </interactant>
    <organismsDiffer>false</organismsDiffer>
    <experiments>4</experiments>
</comment>
<comment type="interaction">
    <interactant intactId="EBI-8648067">
        <id>P17022</id>
    </interactant>
    <interactant intactId="EBI-12012272">
        <id>Q9UBL6-2</id>
        <label>CPNE7</label>
    </interactant>
    <organismsDiffer>false</organismsDiffer>
    <experiments>3</experiments>
</comment>
<comment type="interaction">
    <interactant intactId="EBI-8648067">
        <id>P17022</id>
    </interactant>
    <interactant intactId="EBI-8636434">
        <id>Q5I0X7</id>
        <label>TTC32</label>
    </interactant>
    <organismsDiffer>false</organismsDiffer>
    <experiments>3</experiments>
</comment>
<comment type="interaction">
    <interactant intactId="EBI-8648067">
        <id>P17022</id>
    </interactant>
    <interactant intactId="EBI-740232">
        <id>Q9NWS9-2</id>
        <label>ZNF446</label>
    </interactant>
    <organismsDiffer>false</organismsDiffer>
    <experiments>3</experiments>
</comment>
<comment type="subcellular location">
    <subcellularLocation>
        <location evidence="3">Nucleus</location>
    </subcellularLocation>
</comment>
<comment type="alternative products">
    <event type="alternative splicing"/>
    <isoform>
        <id>P17022-1</id>
        <name>1</name>
        <sequence type="displayed"/>
    </isoform>
    <isoform>
        <id>P17022-2</id>
        <name>2</name>
        <sequence type="described" ref="VSP_016947"/>
    </isoform>
</comment>
<comment type="similarity">
    <text evidence="6">Belongs to the krueppel C2H2-type zinc-finger protein family.</text>
</comment>
<organism>
    <name type="scientific">Homo sapiens</name>
    <name type="common">Human</name>
    <dbReference type="NCBI Taxonomy" id="9606"/>
    <lineage>
        <taxon>Eukaryota</taxon>
        <taxon>Metazoa</taxon>
        <taxon>Chordata</taxon>
        <taxon>Craniata</taxon>
        <taxon>Vertebrata</taxon>
        <taxon>Euteleostomi</taxon>
        <taxon>Mammalia</taxon>
        <taxon>Eutheria</taxon>
        <taxon>Euarchontoglires</taxon>
        <taxon>Primates</taxon>
        <taxon>Haplorrhini</taxon>
        <taxon>Catarrhini</taxon>
        <taxon>Hominidae</taxon>
        <taxon>Homo</taxon>
    </lineage>
</organism>
<protein>
    <recommendedName>
        <fullName>Zinc finger protein 18</fullName>
    </recommendedName>
    <alternativeName>
        <fullName>Heart development-specific gene 1 protein</fullName>
    </alternativeName>
    <alternativeName>
        <fullName>Zinc finger protein 535</fullName>
    </alternativeName>
    <alternativeName>
        <fullName>Zinc finger protein KOX11</fullName>
    </alternativeName>
    <alternativeName>
        <fullName>Zinc finger protein with KRAB and SCAN domains 6</fullName>
    </alternativeName>
</protein>
<keyword id="KW-0025">Alternative splicing</keyword>
<keyword id="KW-0238">DNA-binding</keyword>
<keyword id="KW-0479">Metal-binding</keyword>
<keyword id="KW-0539">Nucleus</keyword>
<keyword id="KW-1267">Proteomics identification</keyword>
<keyword id="KW-1185">Reference proteome</keyword>
<keyword id="KW-0677">Repeat</keyword>
<keyword id="KW-0804">Transcription</keyword>
<keyword id="KW-0805">Transcription regulation</keyword>
<keyword id="KW-0862">Zinc</keyword>
<keyword id="KW-0863">Zinc-finger</keyword>